<comment type="function">
    <text evidence="1">Capsid protein. Probably binds RNA and plays a role in packaging (By similarity).</text>
</comment>
<comment type="subcellular location">
    <subcellularLocation>
        <location evidence="3">Virion</location>
    </subcellularLocation>
</comment>
<comment type="domain">
    <text evidence="1">The N-terminal arginine-rich stretch does not seem to be the major RNA-binding region that allows formation of an infectious ribonucleoprotein complex.</text>
</comment>
<comment type="similarity">
    <text evidence="3">Belongs to the cucumovirus capsid protein family.</text>
</comment>
<keyword id="KW-0007">Acetylation</keyword>
<keyword id="KW-0167">Capsid protein</keyword>
<keyword id="KW-0687">Ribonucleoprotein</keyword>
<keyword id="KW-0694">RNA-binding</keyword>
<keyword id="KW-1142">T=3 icosahedral capsid protein</keyword>
<keyword id="KW-0543">Viral nucleoprotein</keyword>
<keyword id="KW-0946">Virion</keyword>
<protein>
    <recommendedName>
        <fullName>Capsid protein</fullName>
        <shortName>CP</shortName>
    </recommendedName>
    <alternativeName>
        <fullName>Coat protein</fullName>
    </alternativeName>
</protein>
<gene>
    <name type="ORF">ORF3b</name>
</gene>
<evidence type="ECO:0000250" key="1"/>
<evidence type="ECO:0000256" key="2">
    <source>
        <dbReference type="SAM" id="MobiDB-lite"/>
    </source>
</evidence>
<evidence type="ECO:0000305" key="3"/>
<organismHost>
    <name type="scientific">Cucumis sativus</name>
    <name type="common">Cucumber</name>
    <dbReference type="NCBI Taxonomy" id="3659"/>
</organismHost>
<organismHost>
    <name type="scientific">Solanum lycopersicum</name>
    <name type="common">Tomato</name>
    <name type="synonym">Lycopersicon esculentum</name>
    <dbReference type="NCBI Taxonomy" id="4081"/>
</organismHost>
<organismHost>
    <name type="scientific">Spinacia oleracea</name>
    <name type="common">Spinach</name>
    <dbReference type="NCBI Taxonomy" id="3562"/>
</organismHost>
<reference key="1">
    <citation type="journal article" date="1996" name="Nihon Shokubutsu Byori Gakkaiho">
        <title>Six new subgroup I members of Japanese cucumber mosaic virus as determined by nucleotide sequence analysis on RNA3's cDNAs.</title>
        <authorList>
            <person name="Chaumpluk P."/>
            <person name="Sasaki Y."/>
            <person name="Nakajima N."/>
            <person name="Nagano H."/>
            <person name="Nakamura I."/>
            <person name="Suzuki K."/>
            <person name="Mise K."/>
            <person name="Inouye N."/>
            <person name="Okuno T."/>
            <person name="Furusawa I."/>
        </authorList>
    </citation>
    <scope>NUCLEOTIDE SEQUENCE [GENOMIC RNA]</scope>
</reference>
<proteinExistence type="inferred from homology"/>
<feature type="chain" id="PRO_0000083205" description="Capsid protein">
    <location>
        <begin position="1"/>
        <end position="218"/>
    </location>
</feature>
<feature type="region of interest" description="Disordered" evidence="2">
    <location>
        <begin position="1"/>
        <end position="29"/>
    </location>
</feature>
<feature type="compositionally biased region" description="Low complexity" evidence="2">
    <location>
        <begin position="1"/>
        <end position="10"/>
    </location>
</feature>
<feature type="compositionally biased region" description="Basic residues" evidence="2">
    <location>
        <begin position="11"/>
        <end position="21"/>
    </location>
</feature>
<feature type="modified residue" description="N-acetylmethionine; by host" evidence="1">
    <location>
        <position position="1"/>
    </location>
</feature>
<sequence>MDKSESTSAGRNRRRRLRRGSRSAPSSADANFRVLSQQLSRLNKTLSAGRPTINHPTFVGSERCKPGYTFTSITLKPPKIDRGSYYGKRLLLPDSVTEYDKKLVSRIQIRVNPLPKFDSTVWVTVRKVPASSDLSVAAISAMFADGASPVLVYQYAASGVQANNKLLYDLSAMRADIGDMRKYAVLVYSKDDTLETDELVLHVDVEHQRIPTSGVLPV</sequence>
<organism>
    <name type="scientific">Cucumber mosaic virus (strain FT)</name>
    <name type="common">CMV</name>
    <dbReference type="NCBI Taxonomy" id="117112"/>
    <lineage>
        <taxon>Viruses</taxon>
        <taxon>Riboviria</taxon>
        <taxon>Orthornavirae</taxon>
        <taxon>Kitrinoviricota</taxon>
        <taxon>Alsuviricetes</taxon>
        <taxon>Martellivirales</taxon>
        <taxon>Bromoviridae</taxon>
        <taxon>Cucumovirus</taxon>
        <taxon>Cucumber mosaic virus</taxon>
    </lineage>
</organism>
<dbReference type="EMBL" id="D28487">
    <property type="protein sequence ID" value="BAA05847.1"/>
    <property type="molecule type" value="Genomic_RNA"/>
</dbReference>
<dbReference type="SMR" id="Q66140"/>
<dbReference type="GO" id="GO:1990904">
    <property type="term" value="C:ribonucleoprotein complex"/>
    <property type="evidence" value="ECO:0007669"/>
    <property type="project" value="UniProtKB-KW"/>
</dbReference>
<dbReference type="GO" id="GO:0039617">
    <property type="term" value="C:T=3 icosahedral viral capsid"/>
    <property type="evidence" value="ECO:0007669"/>
    <property type="project" value="UniProtKB-KW"/>
</dbReference>
<dbReference type="GO" id="GO:0019013">
    <property type="term" value="C:viral nucleocapsid"/>
    <property type="evidence" value="ECO:0007669"/>
    <property type="project" value="UniProtKB-KW"/>
</dbReference>
<dbReference type="GO" id="GO:0003723">
    <property type="term" value="F:RNA binding"/>
    <property type="evidence" value="ECO:0007669"/>
    <property type="project" value="UniProtKB-KW"/>
</dbReference>
<dbReference type="GO" id="GO:0005198">
    <property type="term" value="F:structural molecule activity"/>
    <property type="evidence" value="ECO:0007669"/>
    <property type="project" value="InterPro"/>
</dbReference>
<dbReference type="Gene3D" id="2.60.120.530">
    <property type="entry name" value="Cucumovirus coat protein, subunit A"/>
    <property type="match status" value="1"/>
</dbReference>
<dbReference type="InterPro" id="IPR000247">
    <property type="entry name" value="Cucumovirus_coat"/>
</dbReference>
<dbReference type="InterPro" id="IPR037137">
    <property type="entry name" value="Cucumovirus_coat_Asu_sf"/>
</dbReference>
<dbReference type="Pfam" id="PF00760">
    <property type="entry name" value="Cucumo_coat"/>
    <property type="match status" value="1"/>
</dbReference>
<dbReference type="PRINTS" id="PR00222">
    <property type="entry name" value="CUCUMOCOAT"/>
</dbReference>
<dbReference type="SUPFAM" id="SSF88633">
    <property type="entry name" value="Positive stranded ssRNA viruses"/>
    <property type="match status" value="1"/>
</dbReference>
<name>CAPSD_CMVFT</name>
<accession>Q66140</accession>